<organism>
    <name type="scientific">Autographa californica nuclear polyhedrosis virus</name>
    <name type="common">AcMNPV</name>
    <dbReference type="NCBI Taxonomy" id="46015"/>
    <lineage>
        <taxon>Viruses</taxon>
        <taxon>Viruses incertae sedis</taxon>
        <taxon>Naldaviricetes</taxon>
        <taxon>Lefavirales</taxon>
        <taxon>Baculoviridae</taxon>
        <taxon>Alphabaculovirus</taxon>
        <taxon>Alphabaculovirus aucalifornicae</taxon>
    </lineage>
</organism>
<proteinExistence type="predicted"/>
<accession>P41673</accession>
<dbReference type="EMBL" id="L22858">
    <property type="protein sequence ID" value="AAA66750.1"/>
    <property type="molecule type" value="Genomic_DNA"/>
</dbReference>
<dbReference type="PIR" id="A72865">
    <property type="entry name" value="A72865"/>
</dbReference>
<dbReference type="RefSeq" id="NP_054150.1">
    <property type="nucleotide sequence ID" value="NC_001623.1"/>
</dbReference>
<dbReference type="SMR" id="P41673"/>
<dbReference type="GeneID" id="1403953"/>
<dbReference type="KEGG" id="vg:1403953"/>
<dbReference type="OrthoDB" id="24327at10239"/>
<dbReference type="Proteomes" id="UP000008292">
    <property type="component" value="Segment"/>
</dbReference>
<dbReference type="InterPro" id="IPR020123">
    <property type="entry name" value="DUF5475"/>
</dbReference>
<dbReference type="Pfam" id="PF17569">
    <property type="entry name" value="DUF5475"/>
    <property type="match status" value="1"/>
</dbReference>
<protein>
    <recommendedName>
        <fullName>Uncharacterized 9.5 kDa protein in HE65-PK2 intergenic region</fullName>
    </recommendedName>
</protein>
<sequence length="82" mass="9532">MSILKVVEACNLAHTFLKLGYLFRAKTCLDIALDNLELLRRKTNIKEVAVMLNKKTTECLQLKRKIDKKIAQRVLIKIYTIK</sequence>
<keyword id="KW-1185">Reference proteome</keyword>
<name>Y120_NPVAC</name>
<organismHost>
    <name type="scientific">Lepidoptera</name>
    <name type="common">butterflies and moths</name>
    <dbReference type="NCBI Taxonomy" id="7088"/>
</organismHost>
<reference key="1">
    <citation type="journal article" date="1994" name="Virology">
        <title>The complete DNA sequence of Autographa californica nuclear polyhedrosis virus.</title>
        <authorList>
            <person name="Ayres M.D."/>
            <person name="Howard S.C."/>
            <person name="Kuzio J."/>
            <person name="Lopez-Ferber M."/>
            <person name="Possee R.D."/>
        </authorList>
    </citation>
    <scope>NUCLEOTIDE SEQUENCE [LARGE SCALE GENOMIC DNA]</scope>
    <source>
        <strain>C6</strain>
    </source>
</reference>
<feature type="chain" id="PRO_0000133059" description="Uncharacterized 9.5 kDa protein in HE65-PK2 intergenic region">
    <location>
        <begin position="1"/>
        <end position="82"/>
    </location>
</feature>